<name>DNAA1_CHLTR</name>
<gene>
    <name evidence="1" type="primary">dnaA1</name>
    <name type="ordered locus">CT_250</name>
</gene>
<comment type="function">
    <text evidence="1">Plays an essential role in the initiation and regulation of chromosomal replication. ATP-DnaA binds to the origin of replication (oriC) to initiate formation of the DNA replication initiation complex once per cell cycle. Binds the DnaA box (a 9 base pair repeat at the origin) and separates the double-stranded (ds)DNA. Forms a right-handed helical filament on oriC DNA; dsDNA binds to the exterior of the filament while single-stranded (ss)DNA is stabiized in the filament's interior. The ATP-DnaA-oriC complex binds and stabilizes one strand of the AT-rich DNA unwinding element (DUE), permitting loading of DNA polymerase. After initiation quickly degrades to an ADP-DnaA complex that is not apt for DNA replication. Binds acidic phospholipids.</text>
</comment>
<comment type="subunit">
    <text evidence="1">Oligomerizes as a right-handed, spiral filament on DNA at oriC.</text>
</comment>
<comment type="subcellular location">
    <subcellularLocation>
        <location evidence="1">Cytoplasm</location>
    </subcellularLocation>
</comment>
<comment type="induction">
    <text evidence="2">In infected human monocytes transcripts are present by day 1 post-infection and last for the 7 days of the experiment. In patients with confirmed synovial Chlamydia infections, 7/8 had transcripts for dnaA1. In infected human Hep-2 cells, transcripts are visible from 11-48 hours post-infection.</text>
</comment>
<comment type="domain">
    <text evidence="1">Domain I is involved in oligomerization and binding regulators, domain II is flexibile and of varying length in different bacteria, domain III forms the AAA+ region, while domain IV binds dsDNA.</text>
</comment>
<comment type="similarity">
    <text evidence="1 3">Belongs to the DnaA family.</text>
</comment>
<dbReference type="EMBL" id="AE001273">
    <property type="protein sequence ID" value="AAC67843.1"/>
    <property type="molecule type" value="Genomic_DNA"/>
</dbReference>
<dbReference type="PIR" id="D71537">
    <property type="entry name" value="D71537"/>
</dbReference>
<dbReference type="SMR" id="O84252"/>
<dbReference type="STRING" id="272561.CT_250"/>
<dbReference type="EnsemblBacteria" id="AAC67843">
    <property type="protein sequence ID" value="AAC67843"/>
    <property type="gene ID" value="CT_250"/>
</dbReference>
<dbReference type="KEGG" id="ctr:CT_250"/>
<dbReference type="PATRIC" id="fig|272561.5.peg.267"/>
<dbReference type="HOGENOM" id="CLU_026910_3_2_0"/>
<dbReference type="InParanoid" id="O84252"/>
<dbReference type="OrthoDB" id="19837at2"/>
<dbReference type="Proteomes" id="UP000000431">
    <property type="component" value="Chromosome"/>
</dbReference>
<dbReference type="GO" id="GO:0005737">
    <property type="term" value="C:cytoplasm"/>
    <property type="evidence" value="ECO:0007669"/>
    <property type="project" value="UniProtKB-SubCell"/>
</dbReference>
<dbReference type="GO" id="GO:0005886">
    <property type="term" value="C:plasma membrane"/>
    <property type="evidence" value="ECO:0000318"/>
    <property type="project" value="GO_Central"/>
</dbReference>
<dbReference type="GO" id="GO:0005524">
    <property type="term" value="F:ATP binding"/>
    <property type="evidence" value="ECO:0007669"/>
    <property type="project" value="UniProtKB-UniRule"/>
</dbReference>
<dbReference type="GO" id="GO:0016887">
    <property type="term" value="F:ATP hydrolysis activity"/>
    <property type="evidence" value="ECO:0007669"/>
    <property type="project" value="InterPro"/>
</dbReference>
<dbReference type="GO" id="GO:0003688">
    <property type="term" value="F:DNA replication origin binding"/>
    <property type="evidence" value="ECO:0000318"/>
    <property type="project" value="GO_Central"/>
</dbReference>
<dbReference type="GO" id="GO:0008289">
    <property type="term" value="F:lipid binding"/>
    <property type="evidence" value="ECO:0007669"/>
    <property type="project" value="UniProtKB-KW"/>
</dbReference>
<dbReference type="GO" id="GO:0006260">
    <property type="term" value="P:DNA replication"/>
    <property type="evidence" value="ECO:0000318"/>
    <property type="project" value="GO_Central"/>
</dbReference>
<dbReference type="GO" id="GO:0006270">
    <property type="term" value="P:DNA replication initiation"/>
    <property type="evidence" value="ECO:0000318"/>
    <property type="project" value="GO_Central"/>
</dbReference>
<dbReference type="GO" id="GO:0006275">
    <property type="term" value="P:regulation of DNA replication"/>
    <property type="evidence" value="ECO:0007669"/>
    <property type="project" value="UniProtKB-UniRule"/>
</dbReference>
<dbReference type="CDD" id="cd00009">
    <property type="entry name" value="AAA"/>
    <property type="match status" value="1"/>
</dbReference>
<dbReference type="CDD" id="cd06571">
    <property type="entry name" value="Bac_DnaA_C"/>
    <property type="match status" value="1"/>
</dbReference>
<dbReference type="Gene3D" id="1.10.1750.10">
    <property type="match status" value="1"/>
</dbReference>
<dbReference type="Gene3D" id="3.30.300.180">
    <property type="match status" value="1"/>
</dbReference>
<dbReference type="Gene3D" id="3.40.50.300">
    <property type="entry name" value="P-loop containing nucleotide triphosphate hydrolases"/>
    <property type="match status" value="1"/>
</dbReference>
<dbReference type="HAMAP" id="MF_00377">
    <property type="entry name" value="DnaA_bact"/>
    <property type="match status" value="1"/>
</dbReference>
<dbReference type="InterPro" id="IPR003593">
    <property type="entry name" value="AAA+_ATPase"/>
</dbReference>
<dbReference type="InterPro" id="IPR001957">
    <property type="entry name" value="Chromosome_initiator_DnaA"/>
</dbReference>
<dbReference type="InterPro" id="IPR020591">
    <property type="entry name" value="Chromosome_initiator_DnaA-like"/>
</dbReference>
<dbReference type="InterPro" id="IPR018312">
    <property type="entry name" value="Chromosome_initiator_DnaA_CS"/>
</dbReference>
<dbReference type="InterPro" id="IPR013159">
    <property type="entry name" value="DnaA_C"/>
</dbReference>
<dbReference type="InterPro" id="IPR013317">
    <property type="entry name" value="DnaA_dom"/>
</dbReference>
<dbReference type="InterPro" id="IPR038454">
    <property type="entry name" value="DnaA_N_sf"/>
</dbReference>
<dbReference type="InterPro" id="IPR027417">
    <property type="entry name" value="P-loop_NTPase"/>
</dbReference>
<dbReference type="InterPro" id="IPR010921">
    <property type="entry name" value="Trp_repressor/repl_initiator"/>
</dbReference>
<dbReference type="NCBIfam" id="NF009087">
    <property type="entry name" value="PRK12422.1"/>
    <property type="match status" value="1"/>
</dbReference>
<dbReference type="PANTHER" id="PTHR30050">
    <property type="entry name" value="CHROMOSOMAL REPLICATION INITIATOR PROTEIN DNAA"/>
    <property type="match status" value="1"/>
</dbReference>
<dbReference type="PANTHER" id="PTHR30050:SF2">
    <property type="entry name" value="CHROMOSOMAL REPLICATION INITIATOR PROTEIN DNAA"/>
    <property type="match status" value="1"/>
</dbReference>
<dbReference type="Pfam" id="PF00308">
    <property type="entry name" value="Bac_DnaA"/>
    <property type="match status" value="1"/>
</dbReference>
<dbReference type="Pfam" id="PF08299">
    <property type="entry name" value="Bac_DnaA_C"/>
    <property type="match status" value="1"/>
</dbReference>
<dbReference type="PRINTS" id="PR00051">
    <property type="entry name" value="DNAA"/>
</dbReference>
<dbReference type="SMART" id="SM00382">
    <property type="entry name" value="AAA"/>
    <property type="match status" value="1"/>
</dbReference>
<dbReference type="SMART" id="SM00760">
    <property type="entry name" value="Bac_DnaA_C"/>
    <property type="match status" value="1"/>
</dbReference>
<dbReference type="SUPFAM" id="SSF52540">
    <property type="entry name" value="P-loop containing nucleoside triphosphate hydrolases"/>
    <property type="match status" value="1"/>
</dbReference>
<dbReference type="SUPFAM" id="SSF48295">
    <property type="entry name" value="TrpR-like"/>
    <property type="match status" value="1"/>
</dbReference>
<dbReference type="PROSITE" id="PS01008">
    <property type="entry name" value="DNAA"/>
    <property type="match status" value="1"/>
</dbReference>
<accession>O84252</accession>
<feature type="chain" id="PRO_0000114162" description="Chromosomal replication initiator protein DnaA 1">
    <location>
        <begin position="1"/>
        <end position="456"/>
    </location>
</feature>
<feature type="region of interest" description="Domain I, interacts with DnaA modulators" evidence="1">
    <location>
        <begin position="1"/>
        <end position="68"/>
    </location>
</feature>
<feature type="region of interest" description="Domain II" evidence="1">
    <location>
        <begin position="68"/>
        <end position="101"/>
    </location>
</feature>
<feature type="region of interest" description="Domain III, AAA+ region" evidence="1">
    <location>
        <begin position="102"/>
        <end position="320"/>
    </location>
</feature>
<feature type="region of interest" description="Domain IV, binds dsDNA" evidence="1">
    <location>
        <begin position="321"/>
        <end position="456"/>
    </location>
</feature>
<feature type="binding site" evidence="1">
    <location>
        <position position="150"/>
    </location>
    <ligand>
        <name>ATP</name>
        <dbReference type="ChEBI" id="CHEBI:30616"/>
    </ligand>
</feature>
<feature type="binding site" evidence="1">
    <location>
        <position position="152"/>
    </location>
    <ligand>
        <name>ATP</name>
        <dbReference type="ChEBI" id="CHEBI:30616"/>
    </ligand>
</feature>
<feature type="binding site" evidence="1">
    <location>
        <position position="153"/>
    </location>
    <ligand>
        <name>ATP</name>
        <dbReference type="ChEBI" id="CHEBI:30616"/>
    </ligand>
</feature>
<feature type="binding site" evidence="1">
    <location>
        <position position="154"/>
    </location>
    <ligand>
        <name>ATP</name>
        <dbReference type="ChEBI" id="CHEBI:30616"/>
    </ligand>
</feature>
<sequence>MRAWEEFLLLQEKEIGVDTVNKWLRSLKVLCFDACNLYLEAKDSFQVTWFEEHIRHKVKASLINNNGKPIRVRVTSLDKSTPFKETQIQQEKTAYFTMKYGDIDPNMSFANFLVTPENDLPVRILQEFAKVSEQGKGFPFNPIYLFGPESSGKTHLMQAAVGGLREAGVKTLYVTSELFTEHLVSAIRSGEMQRFRAFYRNVEALFIEDIEVLSGKGATQEEFFHTFNSLHTEGKLIVISSTFAPGDLKAMEERLISRFEWGISIPVSPLIREGLKSFLERRTEKLNIRIEETALDFLIQALSSHVKSLLHALTTLAKRVAYKKLSHQMLYQGDIEALLHDVLQAAESIRLTPSGIVRATAQYYGVSPESVLGRSQSREYVLPRQVAMFLCRQKLSLSYVKIGEVFSRDHSTVISSIRAISQKLEEDDRECDVSRAIQELTKRLSSAYQSLDFIED</sequence>
<reference key="1">
    <citation type="journal article" date="1998" name="Science">
        <title>Genome sequence of an obligate intracellular pathogen of humans: Chlamydia trachomatis.</title>
        <authorList>
            <person name="Stephens R.S."/>
            <person name="Kalman S."/>
            <person name="Lammel C.J."/>
            <person name="Fan J."/>
            <person name="Marathe R."/>
            <person name="Aravind L."/>
            <person name="Mitchell W.P."/>
            <person name="Olinger L."/>
            <person name="Tatusov R.L."/>
            <person name="Zhao Q."/>
            <person name="Koonin E.V."/>
            <person name="Davis R.W."/>
        </authorList>
    </citation>
    <scope>NUCLEOTIDE SEQUENCE [LARGE SCALE GENOMIC DNA]</scope>
    <source>
        <strain>ATCC VR-885 / DSM 19411 / UW-3/Cx</strain>
    </source>
</reference>
<reference key="2">
    <citation type="journal article" date="2001" name="Mol. Microbiol.">
        <title>Expression of Chlamydia trachomatis genes encoding products required for DNA synthesis and cell division during active versus persistent infection.</title>
        <authorList>
            <person name="Gerard H.C."/>
            <person name="Krausse-Opatz B."/>
            <person name="Wang Z."/>
            <person name="Rudy D."/>
            <person name="Rao J.P."/>
            <person name="Zeidler H."/>
            <person name="Schumacher H.R."/>
            <person name="Whittum-Hudson J.A."/>
            <person name="Koehler L."/>
            <person name="Hudson A.P."/>
        </authorList>
    </citation>
    <scope>INDUCTION</scope>
    <source>
        <strain>Serovar K</strain>
    </source>
</reference>
<evidence type="ECO:0000255" key="1">
    <source>
        <dbReference type="HAMAP-Rule" id="MF_00377"/>
    </source>
</evidence>
<evidence type="ECO:0000269" key="2">
    <source>
    </source>
</evidence>
<evidence type="ECO:0000305" key="3"/>
<keyword id="KW-0067">ATP-binding</keyword>
<keyword id="KW-0963">Cytoplasm</keyword>
<keyword id="KW-0235">DNA replication</keyword>
<keyword id="KW-0238">DNA-binding</keyword>
<keyword id="KW-0446">Lipid-binding</keyword>
<keyword id="KW-0547">Nucleotide-binding</keyword>
<keyword id="KW-1185">Reference proteome</keyword>
<organism>
    <name type="scientific">Chlamydia trachomatis serovar D (strain ATCC VR-885 / DSM 19411 / UW-3/Cx)</name>
    <dbReference type="NCBI Taxonomy" id="272561"/>
    <lineage>
        <taxon>Bacteria</taxon>
        <taxon>Pseudomonadati</taxon>
        <taxon>Chlamydiota</taxon>
        <taxon>Chlamydiia</taxon>
        <taxon>Chlamydiales</taxon>
        <taxon>Chlamydiaceae</taxon>
        <taxon>Chlamydia/Chlamydophila group</taxon>
        <taxon>Chlamydia</taxon>
    </lineage>
</organism>
<protein>
    <recommendedName>
        <fullName evidence="1">Chromosomal replication initiator protein DnaA 1</fullName>
    </recommendedName>
</protein>
<proteinExistence type="evidence at transcript level"/>